<keyword id="KW-1015">Disulfide bond</keyword>
<keyword id="KW-0325">Glycoprotein</keyword>
<keyword id="KW-0378">Hydrolase</keyword>
<keyword id="KW-0472">Membrane</keyword>
<keyword id="KW-0645">Protease</keyword>
<keyword id="KW-1267">Proteomics identification</keyword>
<keyword id="KW-1185">Reference proteome</keyword>
<keyword id="KW-0720">Serine protease</keyword>
<keyword id="KW-0732">Signal</keyword>
<keyword id="KW-0812">Transmembrane</keyword>
<keyword id="KW-1133">Transmembrane helix</keyword>
<keyword id="KW-0865">Zymogen</keyword>
<gene>
    <name evidence="9" type="primary">TPSG1</name>
    <name type="synonym">PRSS31</name>
    <name type="synonym">TMT</name>
</gene>
<sequence>MALGACGLLLLLAVPGVSLRTLQPGCGRPQVSDAGGRIVGGHAAPAGAWPWQASLRLRRVHVCGGSLLSPQWVLTAAHCFSGSLNSSDYQVHLGELEITLSPHFSTVRQIILHSSPSGQPGTSGDIALVELSVPVTLSSRILPVCLPEASDDFCPGIRCWVTGWGYTREGEPLPPPYSLREVKVSVVDTETCRRDYPGPGGSILQPDMLCARGPGDACQDDSGGPLVCQVNGAWVQAGTVSWGEGCGRPNRPGVYTRVPAYVNWIRRHITASGGSESGYPRLPLLAGFFLPGLFLLLVSCVLLAKCLLHPSADGTPFPAPD</sequence>
<dbReference type="EC" id="3.4.21.-"/>
<dbReference type="EMBL" id="AF175522">
    <property type="protein sequence ID" value="AAF03695.1"/>
    <property type="molecule type" value="mRNA"/>
</dbReference>
<dbReference type="EMBL" id="AF175759">
    <property type="protein sequence ID" value="AAF03697.1"/>
    <property type="molecule type" value="Genomic_DNA"/>
</dbReference>
<dbReference type="EMBL" id="AF191031">
    <property type="protein sequence ID" value="AAF76457.1"/>
    <property type="molecule type" value="Genomic_DNA"/>
</dbReference>
<dbReference type="EMBL" id="AF195508">
    <property type="protein sequence ID" value="AAF76458.1"/>
    <property type="molecule type" value="Genomic_DNA"/>
</dbReference>
<dbReference type="EMBL" id="AE006466">
    <property type="protein sequence ID" value="AAK61269.1"/>
    <property type="molecule type" value="Genomic_DNA"/>
</dbReference>
<dbReference type="EMBL" id="AC120498">
    <property type="status" value="NOT_ANNOTATED_CDS"/>
    <property type="molecule type" value="Genomic_DNA"/>
</dbReference>
<dbReference type="EMBL" id="AF223563">
    <property type="protein sequence ID" value="AAG48852.2"/>
    <property type="molecule type" value="Genomic_DNA"/>
</dbReference>
<dbReference type="CCDS" id="CCDS10430.1"/>
<dbReference type="RefSeq" id="NP_036599.4">
    <property type="nucleotide sequence ID" value="NM_012467.4"/>
</dbReference>
<dbReference type="SMR" id="Q9NRR2"/>
<dbReference type="BioGRID" id="117351">
    <property type="interactions" value="19"/>
</dbReference>
<dbReference type="FunCoup" id="Q9NRR2">
    <property type="interactions" value="86"/>
</dbReference>
<dbReference type="IntAct" id="Q9NRR2">
    <property type="interactions" value="2"/>
</dbReference>
<dbReference type="STRING" id="9606.ENSP00000234798"/>
<dbReference type="BindingDB" id="Q9NRR2"/>
<dbReference type="ChEMBL" id="CHEMBL4955"/>
<dbReference type="MEROPS" id="S01.028"/>
<dbReference type="GlyCosmos" id="Q9NRR2">
    <property type="glycosylation" value="1 site, No reported glycans"/>
</dbReference>
<dbReference type="GlyGen" id="Q9NRR2">
    <property type="glycosylation" value="2 sites, 1 O-linked glycan (1 site)"/>
</dbReference>
<dbReference type="iPTMnet" id="Q9NRR2"/>
<dbReference type="PhosphoSitePlus" id="Q9NRR2"/>
<dbReference type="BioMuta" id="TPSG1"/>
<dbReference type="DMDM" id="296453005"/>
<dbReference type="MassIVE" id="Q9NRR2"/>
<dbReference type="PaxDb" id="9606-ENSP00000234798"/>
<dbReference type="PeptideAtlas" id="Q9NRR2"/>
<dbReference type="ProteomicsDB" id="82407"/>
<dbReference type="Antibodypedia" id="22993">
    <property type="antibodies" value="223 antibodies from 16 providers"/>
</dbReference>
<dbReference type="DNASU" id="25823"/>
<dbReference type="Ensembl" id="ENST00000234798.5">
    <property type="protein sequence ID" value="ENSP00000234798.4"/>
    <property type="gene ID" value="ENSG00000116176.8"/>
</dbReference>
<dbReference type="GeneID" id="25823"/>
<dbReference type="KEGG" id="hsa:25823"/>
<dbReference type="MANE-Select" id="ENST00000234798.5">
    <property type="protein sequence ID" value="ENSP00000234798.4"/>
    <property type="RefSeq nucleotide sequence ID" value="NM_012467.4"/>
    <property type="RefSeq protein sequence ID" value="NP_036599.4"/>
</dbReference>
<dbReference type="UCSC" id="uc002ckw.3">
    <property type="organism name" value="human"/>
</dbReference>
<dbReference type="AGR" id="HGNC:14134"/>
<dbReference type="CTD" id="25823"/>
<dbReference type="DisGeNET" id="25823"/>
<dbReference type="GeneCards" id="TPSG1"/>
<dbReference type="HGNC" id="HGNC:14134">
    <property type="gene designation" value="TPSG1"/>
</dbReference>
<dbReference type="HPA" id="ENSG00000116176">
    <property type="expression patterns" value="Tissue enriched (intestine)"/>
</dbReference>
<dbReference type="MIM" id="609341">
    <property type="type" value="gene"/>
</dbReference>
<dbReference type="neXtProt" id="NX_Q9NRR2"/>
<dbReference type="OpenTargets" id="ENSG00000116176"/>
<dbReference type="PharmGKB" id="PA37849"/>
<dbReference type="VEuPathDB" id="HostDB:ENSG00000116176"/>
<dbReference type="eggNOG" id="KOG3627">
    <property type="taxonomic scope" value="Eukaryota"/>
</dbReference>
<dbReference type="GeneTree" id="ENSGT00940000163349"/>
<dbReference type="HOGENOM" id="CLU_006842_0_4_1"/>
<dbReference type="InParanoid" id="Q9NRR2"/>
<dbReference type="OMA" id="CGQPQHS"/>
<dbReference type="OrthoDB" id="93664at2759"/>
<dbReference type="PAN-GO" id="Q9NRR2">
    <property type="GO annotations" value="3 GO annotations based on evolutionary models"/>
</dbReference>
<dbReference type="PhylomeDB" id="Q9NRR2"/>
<dbReference type="TreeFam" id="TF351676"/>
<dbReference type="PathwayCommons" id="Q9NRR2"/>
<dbReference type="SignaLink" id="Q9NRR2"/>
<dbReference type="BioGRID-ORCS" id="25823">
    <property type="hits" value="30 hits in 1145 CRISPR screens"/>
</dbReference>
<dbReference type="GeneWiki" id="TPSG1"/>
<dbReference type="GenomeRNAi" id="25823"/>
<dbReference type="Pharos" id="Q9NRR2">
    <property type="development level" value="Tchem"/>
</dbReference>
<dbReference type="PRO" id="PR:Q9NRR2"/>
<dbReference type="Proteomes" id="UP000005640">
    <property type="component" value="Chromosome 16"/>
</dbReference>
<dbReference type="RNAct" id="Q9NRR2">
    <property type="molecule type" value="protein"/>
</dbReference>
<dbReference type="Bgee" id="ENSG00000116176">
    <property type="expression patterns" value="Expressed in mucosa of transverse colon and 129 other cell types or tissues"/>
</dbReference>
<dbReference type="GO" id="GO:0005615">
    <property type="term" value="C:extracellular space"/>
    <property type="evidence" value="ECO:0000318"/>
    <property type="project" value="GO_Central"/>
</dbReference>
<dbReference type="GO" id="GO:0005886">
    <property type="term" value="C:plasma membrane"/>
    <property type="evidence" value="ECO:0000304"/>
    <property type="project" value="ProtInc"/>
</dbReference>
<dbReference type="GO" id="GO:0004252">
    <property type="term" value="F:serine-type endopeptidase activity"/>
    <property type="evidence" value="ECO:0000318"/>
    <property type="project" value="GO_Central"/>
</dbReference>
<dbReference type="GO" id="GO:0008236">
    <property type="term" value="F:serine-type peptidase activity"/>
    <property type="evidence" value="ECO:0000304"/>
    <property type="project" value="ProtInc"/>
</dbReference>
<dbReference type="GO" id="GO:0006508">
    <property type="term" value="P:proteolysis"/>
    <property type="evidence" value="ECO:0000318"/>
    <property type="project" value="GO_Central"/>
</dbReference>
<dbReference type="CDD" id="cd00190">
    <property type="entry name" value="Tryp_SPc"/>
    <property type="match status" value="1"/>
</dbReference>
<dbReference type="FunFam" id="2.40.10.10:FF:000039">
    <property type="entry name" value="Brain-specific serine protease 4"/>
    <property type="match status" value="1"/>
</dbReference>
<dbReference type="Gene3D" id="2.40.10.10">
    <property type="entry name" value="Trypsin-like serine proteases"/>
    <property type="match status" value="2"/>
</dbReference>
<dbReference type="InterPro" id="IPR009003">
    <property type="entry name" value="Peptidase_S1_PA"/>
</dbReference>
<dbReference type="InterPro" id="IPR043504">
    <property type="entry name" value="Peptidase_S1_PA_chymotrypsin"/>
</dbReference>
<dbReference type="InterPro" id="IPR001314">
    <property type="entry name" value="Peptidase_S1A"/>
</dbReference>
<dbReference type="InterPro" id="IPR001254">
    <property type="entry name" value="Trypsin_dom"/>
</dbReference>
<dbReference type="InterPro" id="IPR018114">
    <property type="entry name" value="TRYPSIN_HIS"/>
</dbReference>
<dbReference type="PANTHER" id="PTHR24253:SF170">
    <property type="entry name" value="PEPTIDASE S1 DOMAIN-CONTAINING PROTEIN"/>
    <property type="match status" value="1"/>
</dbReference>
<dbReference type="PANTHER" id="PTHR24253">
    <property type="entry name" value="TRANSMEMBRANE PROTEASE SERINE"/>
    <property type="match status" value="1"/>
</dbReference>
<dbReference type="Pfam" id="PF00089">
    <property type="entry name" value="Trypsin"/>
    <property type="match status" value="1"/>
</dbReference>
<dbReference type="PRINTS" id="PR00722">
    <property type="entry name" value="CHYMOTRYPSIN"/>
</dbReference>
<dbReference type="SMART" id="SM00020">
    <property type="entry name" value="Tryp_SPc"/>
    <property type="match status" value="1"/>
</dbReference>
<dbReference type="SUPFAM" id="SSF50494">
    <property type="entry name" value="Trypsin-like serine proteases"/>
    <property type="match status" value="1"/>
</dbReference>
<dbReference type="PROSITE" id="PS50240">
    <property type="entry name" value="TRYPSIN_DOM"/>
    <property type="match status" value="1"/>
</dbReference>
<dbReference type="PROSITE" id="PS00134">
    <property type="entry name" value="TRYPSIN_HIS"/>
    <property type="match status" value="1"/>
</dbReference>
<evidence type="ECO:0000250" key="1"/>
<evidence type="ECO:0000255" key="2"/>
<evidence type="ECO:0000255" key="3">
    <source>
        <dbReference type="PROSITE-ProRule" id="PRU00274"/>
    </source>
</evidence>
<evidence type="ECO:0000269" key="4">
    <source>
    </source>
</evidence>
<evidence type="ECO:0000269" key="5">
    <source>
    </source>
</evidence>
<evidence type="ECO:0000269" key="6">
    <source>
    </source>
</evidence>
<evidence type="ECO:0000269" key="7">
    <source ref="5"/>
</evidence>
<evidence type="ECO:0000305" key="8"/>
<evidence type="ECO:0000312" key="9">
    <source>
        <dbReference type="HGNC" id="HGNC:14134"/>
    </source>
</evidence>
<feature type="signal peptide" evidence="2">
    <location>
        <begin position="1"/>
        <end position="19"/>
    </location>
</feature>
<feature type="chain" id="PRO_0000027498" description="Tryptase gamma">
    <location>
        <begin position="20"/>
        <end position="321"/>
    </location>
</feature>
<feature type="chain" id="PRO_0000027499" description="Tryptase gamma light chain">
    <location>
        <begin position="20"/>
        <end position="36"/>
    </location>
</feature>
<feature type="chain" id="PRO_0000027500" description="Tryptase gamma heavy chain">
    <location>
        <begin position="38"/>
        <end position="321"/>
    </location>
</feature>
<feature type="transmembrane region" description="Helical" evidence="2">
    <location>
        <begin position="284"/>
        <end position="304"/>
    </location>
</feature>
<feature type="domain" description="Peptidase S1" evidence="3">
    <location>
        <begin position="38"/>
        <end position="270"/>
    </location>
</feature>
<feature type="active site" description="Charge relay system" evidence="1">
    <location>
        <position position="78"/>
    </location>
</feature>
<feature type="active site" description="Charge relay system" evidence="1">
    <location>
        <position position="125"/>
    </location>
</feature>
<feature type="active site" description="Charge relay system" evidence="1">
    <location>
        <position position="222"/>
    </location>
</feature>
<feature type="glycosylation site" description="N-linked (GlcNAc...) asparagine" evidence="2">
    <location>
        <position position="85"/>
    </location>
</feature>
<feature type="disulfide bond" description="Interchain (between light and heavy chains)" evidence="3">
    <location>
        <begin position="26"/>
        <end position="145"/>
    </location>
</feature>
<feature type="disulfide bond" evidence="3">
    <location>
        <begin position="63"/>
        <end position="79"/>
    </location>
</feature>
<feature type="disulfide bond" evidence="3">
    <location>
        <begin position="159"/>
        <end position="228"/>
    </location>
</feature>
<feature type="disulfide bond" evidence="3">
    <location>
        <begin position="192"/>
        <end position="210"/>
    </location>
</feature>
<feature type="disulfide bond" evidence="3">
    <location>
        <begin position="218"/>
        <end position="246"/>
    </location>
</feature>
<feature type="sequence variant" id="VAR_012097" description="In allele gamma-II; dbSNP:rs760357." evidence="4 5">
    <original>V</original>
    <variation>M</variation>
    <location>
        <position position="60"/>
    </location>
</feature>
<feature type="sequence variant" id="VAR_012098" description="In allele gamma-II." evidence="5">
    <original>I</original>
    <variation>M</variation>
    <location>
        <position position="126"/>
    </location>
</feature>
<feature type="sequence variant" id="VAR_012099" description="In allele gamma-II." evidence="5">
    <original>S</original>
    <variation>T</variation>
    <location>
        <position position="132"/>
    </location>
</feature>
<feature type="sequence variant" id="VAR_025012" description="In dbSNP:rs4984638." evidence="5">
    <original>W</original>
    <variation>S</variation>
    <location>
        <position position="160"/>
    </location>
</feature>
<feature type="sequence variant" id="VAR_012100" description="In allele gamma-II." evidence="5">
    <original>L</original>
    <variation>I</variation>
    <location>
        <position position="204"/>
    </location>
</feature>
<feature type="sequence variant" id="VAR_061773" description="In dbSNP:rs11248860." evidence="4 5 6 7">
    <original>T</original>
    <variation>I</variation>
    <location>
        <position position="239"/>
    </location>
</feature>
<feature type="sequence variant" id="VAR_012101" description="In allele gamma-II; dbSNP:rs1004041." evidence="4 5 7">
    <original>F</original>
    <variation>L</variation>
    <location>
        <position position="288"/>
    </location>
</feature>
<reference key="1">
    <citation type="journal article" date="1999" name="J. Biol. Chem.">
        <title>Identification of a new member of the tryptase family of mouse and human mast cell proteases which possesses a novel COOH-terminal hydrophobic extension.</title>
        <authorList>
            <person name="Wong G.W."/>
            <person name="Tang Y."/>
            <person name="Feyfant E."/>
            <person name="Sali A."/>
            <person name="Li L."/>
            <person name="Li Y."/>
            <person name="Huang C."/>
            <person name="Friend D.S."/>
            <person name="Krilis S.A."/>
            <person name="Stevens R.L."/>
        </authorList>
    </citation>
    <scope>NUCLEOTIDE SEQUENCE [GENOMIC DNA / MRNA]</scope>
    <scope>VARIANTS MET-60; ILE-239 AND LEU-288</scope>
</reference>
<reference key="2">
    <citation type="journal article" date="2000" name="J. Immunol.">
        <title>Characterization of human gamma-tryptases, novel members of the chromosome 16p mast cell tryptase and prostasin gene families.</title>
        <authorList>
            <person name="Caughey G.H."/>
            <person name="Raymond W.W."/>
            <person name="Blount J.L."/>
            <person name="Hau L.W."/>
            <person name="Pallaoro M."/>
            <person name="Wolters P.J."/>
            <person name="Verghese G.M."/>
        </authorList>
    </citation>
    <scope>NUCLEOTIDE SEQUENCE [GENOMIC DNA]</scope>
    <scope>VARIANTS MET-60; MET-126; THR-132; SER-160; ILE-204; ILE-239 AND LEU-288</scope>
</reference>
<reference key="3">
    <citation type="journal article" date="2001" name="Hum. Mol. Genet.">
        <title>Sequence, structure and pathology of the fully annotated terminal 2 Mb of the short arm of human chromosome 16.</title>
        <authorList>
            <person name="Daniels R.J."/>
            <person name="Peden J.F."/>
            <person name="Lloyd C."/>
            <person name="Horsley S.W."/>
            <person name="Clark K."/>
            <person name="Tufarelli C."/>
            <person name="Kearney L."/>
            <person name="Buckle V.J."/>
            <person name="Doggett N.A."/>
            <person name="Flint J."/>
            <person name="Higgs D.R."/>
        </authorList>
    </citation>
    <scope>NUCLEOTIDE SEQUENCE [LARGE SCALE GENOMIC DNA]</scope>
    <scope>VARIANT ILE-239</scope>
</reference>
<reference key="4">
    <citation type="journal article" date="2004" name="Nature">
        <title>The sequence and analysis of duplication-rich human chromosome 16.</title>
        <authorList>
            <person name="Martin J."/>
            <person name="Han C."/>
            <person name="Gordon L.A."/>
            <person name="Terry A."/>
            <person name="Prabhakar S."/>
            <person name="She X."/>
            <person name="Xie G."/>
            <person name="Hellsten U."/>
            <person name="Chan Y.M."/>
            <person name="Altherr M."/>
            <person name="Couronne O."/>
            <person name="Aerts A."/>
            <person name="Bajorek E."/>
            <person name="Black S."/>
            <person name="Blumer H."/>
            <person name="Branscomb E."/>
            <person name="Brown N.C."/>
            <person name="Bruno W.J."/>
            <person name="Buckingham J.M."/>
            <person name="Callen D.F."/>
            <person name="Campbell C.S."/>
            <person name="Campbell M.L."/>
            <person name="Campbell E.W."/>
            <person name="Caoile C."/>
            <person name="Challacombe J.F."/>
            <person name="Chasteen L.A."/>
            <person name="Chertkov O."/>
            <person name="Chi H.C."/>
            <person name="Christensen M."/>
            <person name="Clark L.M."/>
            <person name="Cohn J.D."/>
            <person name="Denys M."/>
            <person name="Detter J.C."/>
            <person name="Dickson M."/>
            <person name="Dimitrijevic-Bussod M."/>
            <person name="Escobar J."/>
            <person name="Fawcett J.J."/>
            <person name="Flowers D."/>
            <person name="Fotopulos D."/>
            <person name="Glavina T."/>
            <person name="Gomez M."/>
            <person name="Gonzales E."/>
            <person name="Goodstein D."/>
            <person name="Goodwin L.A."/>
            <person name="Grady D.L."/>
            <person name="Grigoriev I."/>
            <person name="Groza M."/>
            <person name="Hammon N."/>
            <person name="Hawkins T."/>
            <person name="Haydu L."/>
            <person name="Hildebrand C.E."/>
            <person name="Huang W."/>
            <person name="Israni S."/>
            <person name="Jett J."/>
            <person name="Jewett P.B."/>
            <person name="Kadner K."/>
            <person name="Kimball H."/>
            <person name="Kobayashi A."/>
            <person name="Krawczyk M.-C."/>
            <person name="Leyba T."/>
            <person name="Longmire J.L."/>
            <person name="Lopez F."/>
            <person name="Lou Y."/>
            <person name="Lowry S."/>
            <person name="Ludeman T."/>
            <person name="Manohar C.F."/>
            <person name="Mark G.A."/>
            <person name="McMurray K.L."/>
            <person name="Meincke L.J."/>
            <person name="Morgan J."/>
            <person name="Moyzis R.K."/>
            <person name="Mundt M.O."/>
            <person name="Munk A.C."/>
            <person name="Nandkeshwar R.D."/>
            <person name="Pitluck S."/>
            <person name="Pollard M."/>
            <person name="Predki P."/>
            <person name="Parson-Quintana B."/>
            <person name="Ramirez L."/>
            <person name="Rash S."/>
            <person name="Retterer J."/>
            <person name="Ricke D.O."/>
            <person name="Robinson D.L."/>
            <person name="Rodriguez A."/>
            <person name="Salamov A."/>
            <person name="Saunders E.H."/>
            <person name="Scott D."/>
            <person name="Shough T."/>
            <person name="Stallings R.L."/>
            <person name="Stalvey M."/>
            <person name="Sutherland R.D."/>
            <person name="Tapia R."/>
            <person name="Tesmer J.G."/>
            <person name="Thayer N."/>
            <person name="Thompson L.S."/>
            <person name="Tice H."/>
            <person name="Torney D.C."/>
            <person name="Tran-Gyamfi M."/>
            <person name="Tsai M."/>
            <person name="Ulanovsky L.E."/>
            <person name="Ustaszewska A."/>
            <person name="Vo N."/>
            <person name="White P.S."/>
            <person name="Williams A.L."/>
            <person name="Wills P.L."/>
            <person name="Wu J.-R."/>
            <person name="Wu K."/>
            <person name="Yang J."/>
            <person name="DeJong P."/>
            <person name="Bruce D."/>
            <person name="Doggett N.A."/>
            <person name="Deaven L."/>
            <person name="Schmutz J."/>
            <person name="Grimwood J."/>
            <person name="Richardson P."/>
            <person name="Rokhsar D.S."/>
            <person name="Eichler E.E."/>
            <person name="Gilna P."/>
            <person name="Lucas S.M."/>
            <person name="Myers R.M."/>
            <person name="Rubin E.M."/>
            <person name="Pennacchio L.A."/>
        </authorList>
    </citation>
    <scope>NUCLEOTIDE SEQUENCE [LARGE SCALE GENOMIC DNA]</scope>
</reference>
<reference key="5">
    <citation type="submission" date="2001-01" db="EMBL/GenBank/DDBJ databases">
        <title>Organization and alternative splicing of CACNA1H.</title>
        <authorList>
            <person name="Mittman S."/>
            <person name="Agnew W.S."/>
        </authorList>
    </citation>
    <scope>NUCLEOTIDE SEQUENCE [GENOMIC DNA] OF 220-321</scope>
    <scope>VARIANTS ILE-239 AND LEU-288</scope>
</reference>
<protein>
    <recommendedName>
        <fullName evidence="8">Tryptase gamma</fullName>
        <ecNumber>3.4.21.-</ecNumber>
    </recommendedName>
    <alternativeName>
        <fullName>Serine protease 31</fullName>
    </alternativeName>
    <alternativeName>
        <fullName>Transmembrane tryptase</fullName>
    </alternativeName>
    <component>
        <recommendedName>
            <fullName>Tryptase gamma light chain</fullName>
        </recommendedName>
    </component>
    <component>
        <recommendedName>
            <fullName>Tryptase gamma heavy chain</fullName>
        </recommendedName>
    </component>
</protein>
<accession>Q9NRR2</accession>
<accession>Q96RZ8</accession>
<accession>Q9C015</accession>
<accession>Q9NRQ8</accession>
<accession>Q9UBB2</accession>
<proteinExistence type="evidence at protein level"/>
<organism>
    <name type="scientific">Homo sapiens</name>
    <name type="common">Human</name>
    <dbReference type="NCBI Taxonomy" id="9606"/>
    <lineage>
        <taxon>Eukaryota</taxon>
        <taxon>Metazoa</taxon>
        <taxon>Chordata</taxon>
        <taxon>Craniata</taxon>
        <taxon>Vertebrata</taxon>
        <taxon>Euteleostomi</taxon>
        <taxon>Mammalia</taxon>
        <taxon>Eutheria</taxon>
        <taxon>Euarchontoglires</taxon>
        <taxon>Primates</taxon>
        <taxon>Haplorrhini</taxon>
        <taxon>Catarrhini</taxon>
        <taxon>Hominidae</taxon>
        <taxon>Homo</taxon>
    </lineage>
</organism>
<comment type="interaction">
    <interactant intactId="EBI-17210651">
        <id>Q9NRR2</id>
    </interactant>
    <interactant intactId="EBI-749311">
        <id>P37235</id>
        <label>HPCAL1</label>
    </interactant>
    <organismsDiffer>false</organismsDiffer>
    <experiments>3</experiments>
</comment>
<comment type="interaction">
    <interactant intactId="EBI-17210651">
        <id>Q9NRR2</id>
    </interactant>
    <interactant intactId="EBI-749635">
        <id>P61601</id>
        <label>NCALD</label>
    </interactant>
    <organismsDiffer>false</organismsDiffer>
    <experiments>3</experiments>
</comment>
<comment type="subcellular location">
    <subcellularLocation>
        <location evidence="8">Membrane</location>
        <topology evidence="8">Single-pass membrane protein</topology>
    </subcellularLocation>
</comment>
<comment type="tissue specificity">
    <text>Expressed in many tissues.</text>
</comment>
<comment type="polymorphism">
    <text evidence="5 6">There are two alleles; gamma-I and gamma-II which differ by 5 residues.</text>
</comment>
<comment type="similarity">
    <text evidence="3">Belongs to the peptidase S1 family. Tryptase subfamily.</text>
</comment>
<name>TRYG1_HUMAN</name>